<organism>
    <name type="scientific">Burkholderia orbicola (strain MC0-3)</name>
    <dbReference type="NCBI Taxonomy" id="406425"/>
    <lineage>
        <taxon>Bacteria</taxon>
        <taxon>Pseudomonadati</taxon>
        <taxon>Pseudomonadota</taxon>
        <taxon>Betaproteobacteria</taxon>
        <taxon>Burkholderiales</taxon>
        <taxon>Burkholderiaceae</taxon>
        <taxon>Burkholderia</taxon>
        <taxon>Burkholderia cepacia complex</taxon>
        <taxon>Burkholderia orbicola</taxon>
    </lineage>
</organism>
<gene>
    <name evidence="1" type="primary">hisB</name>
    <name type="ordered locus">Bcenmc03_0406</name>
</gene>
<evidence type="ECO:0000255" key="1">
    <source>
        <dbReference type="HAMAP-Rule" id="MF_00076"/>
    </source>
</evidence>
<dbReference type="EC" id="4.2.1.19" evidence="1"/>
<dbReference type="EMBL" id="CP000958">
    <property type="protein sequence ID" value="ACA89586.1"/>
    <property type="molecule type" value="Genomic_DNA"/>
</dbReference>
<dbReference type="RefSeq" id="WP_006477126.1">
    <property type="nucleotide sequence ID" value="NC_010508.1"/>
</dbReference>
<dbReference type="SMR" id="B1JUA1"/>
<dbReference type="GeneID" id="83047209"/>
<dbReference type="KEGG" id="bcm:Bcenmc03_0406"/>
<dbReference type="HOGENOM" id="CLU_044308_2_0_4"/>
<dbReference type="UniPathway" id="UPA00031">
    <property type="reaction ID" value="UER00011"/>
</dbReference>
<dbReference type="Proteomes" id="UP000002169">
    <property type="component" value="Chromosome 1"/>
</dbReference>
<dbReference type="GO" id="GO:0005737">
    <property type="term" value="C:cytoplasm"/>
    <property type="evidence" value="ECO:0007669"/>
    <property type="project" value="UniProtKB-SubCell"/>
</dbReference>
<dbReference type="GO" id="GO:0004424">
    <property type="term" value="F:imidazoleglycerol-phosphate dehydratase activity"/>
    <property type="evidence" value="ECO:0007669"/>
    <property type="project" value="UniProtKB-UniRule"/>
</dbReference>
<dbReference type="GO" id="GO:0000105">
    <property type="term" value="P:L-histidine biosynthetic process"/>
    <property type="evidence" value="ECO:0007669"/>
    <property type="project" value="UniProtKB-UniRule"/>
</dbReference>
<dbReference type="CDD" id="cd07914">
    <property type="entry name" value="IGPD"/>
    <property type="match status" value="1"/>
</dbReference>
<dbReference type="FunFam" id="3.30.230.40:FF:000002">
    <property type="entry name" value="Imidazoleglycerol-phosphate dehydratase"/>
    <property type="match status" value="1"/>
</dbReference>
<dbReference type="FunFam" id="3.30.230.40:FF:000003">
    <property type="entry name" value="Imidazoleglycerol-phosphate dehydratase HisB"/>
    <property type="match status" value="1"/>
</dbReference>
<dbReference type="Gene3D" id="3.30.230.40">
    <property type="entry name" value="Imidazole glycerol phosphate dehydratase, domain 1"/>
    <property type="match status" value="2"/>
</dbReference>
<dbReference type="HAMAP" id="MF_00076">
    <property type="entry name" value="HisB"/>
    <property type="match status" value="1"/>
</dbReference>
<dbReference type="InterPro" id="IPR038494">
    <property type="entry name" value="IGPD_sf"/>
</dbReference>
<dbReference type="InterPro" id="IPR000807">
    <property type="entry name" value="ImidazoleglycerolP_deHydtase"/>
</dbReference>
<dbReference type="InterPro" id="IPR020565">
    <property type="entry name" value="ImidazoleglycerP_deHydtase_CS"/>
</dbReference>
<dbReference type="InterPro" id="IPR020568">
    <property type="entry name" value="Ribosomal_Su5_D2-typ_SF"/>
</dbReference>
<dbReference type="NCBIfam" id="NF002106">
    <property type="entry name" value="PRK00951.1-1"/>
    <property type="match status" value="1"/>
</dbReference>
<dbReference type="NCBIfam" id="NF002109">
    <property type="entry name" value="PRK00951.1-5"/>
    <property type="match status" value="1"/>
</dbReference>
<dbReference type="NCBIfam" id="NF002111">
    <property type="entry name" value="PRK00951.2-1"/>
    <property type="match status" value="1"/>
</dbReference>
<dbReference type="NCBIfam" id="NF002114">
    <property type="entry name" value="PRK00951.2-4"/>
    <property type="match status" value="1"/>
</dbReference>
<dbReference type="PANTHER" id="PTHR23133:SF2">
    <property type="entry name" value="IMIDAZOLEGLYCEROL-PHOSPHATE DEHYDRATASE"/>
    <property type="match status" value="1"/>
</dbReference>
<dbReference type="PANTHER" id="PTHR23133">
    <property type="entry name" value="IMIDAZOLEGLYCEROL-PHOSPHATE DEHYDRATASE HIS7"/>
    <property type="match status" value="1"/>
</dbReference>
<dbReference type="Pfam" id="PF00475">
    <property type="entry name" value="IGPD"/>
    <property type="match status" value="1"/>
</dbReference>
<dbReference type="SUPFAM" id="SSF54211">
    <property type="entry name" value="Ribosomal protein S5 domain 2-like"/>
    <property type="match status" value="2"/>
</dbReference>
<dbReference type="PROSITE" id="PS00954">
    <property type="entry name" value="IGP_DEHYDRATASE_1"/>
    <property type="match status" value="1"/>
</dbReference>
<dbReference type="PROSITE" id="PS00955">
    <property type="entry name" value="IGP_DEHYDRATASE_2"/>
    <property type="match status" value="1"/>
</dbReference>
<accession>B1JUA1</accession>
<proteinExistence type="inferred from homology"/>
<name>HIS7_BURO0</name>
<reference key="1">
    <citation type="submission" date="2008-02" db="EMBL/GenBank/DDBJ databases">
        <title>Complete sequence of chromosome 1 of Burkholderia cenocepacia MC0-3.</title>
        <authorList>
            <person name="Copeland A."/>
            <person name="Lucas S."/>
            <person name="Lapidus A."/>
            <person name="Barry K."/>
            <person name="Bruce D."/>
            <person name="Goodwin L."/>
            <person name="Glavina del Rio T."/>
            <person name="Dalin E."/>
            <person name="Tice H."/>
            <person name="Pitluck S."/>
            <person name="Chain P."/>
            <person name="Malfatti S."/>
            <person name="Shin M."/>
            <person name="Vergez L."/>
            <person name="Schmutz J."/>
            <person name="Larimer F."/>
            <person name="Land M."/>
            <person name="Hauser L."/>
            <person name="Kyrpides N."/>
            <person name="Mikhailova N."/>
            <person name="Tiedje J."/>
            <person name="Richardson P."/>
        </authorList>
    </citation>
    <scope>NUCLEOTIDE SEQUENCE [LARGE SCALE GENOMIC DNA]</scope>
    <source>
        <strain>MC0-3</strain>
    </source>
</reference>
<comment type="catalytic activity">
    <reaction evidence="1">
        <text>D-erythro-1-(imidazol-4-yl)glycerol 3-phosphate = 3-(imidazol-4-yl)-2-oxopropyl phosphate + H2O</text>
        <dbReference type="Rhea" id="RHEA:11040"/>
        <dbReference type="ChEBI" id="CHEBI:15377"/>
        <dbReference type="ChEBI" id="CHEBI:57766"/>
        <dbReference type="ChEBI" id="CHEBI:58278"/>
        <dbReference type="EC" id="4.2.1.19"/>
    </reaction>
</comment>
<comment type="pathway">
    <text evidence="1">Amino-acid biosynthesis; L-histidine biosynthesis; L-histidine from 5-phospho-alpha-D-ribose 1-diphosphate: step 6/9.</text>
</comment>
<comment type="subcellular location">
    <subcellularLocation>
        <location evidence="1">Cytoplasm</location>
    </subcellularLocation>
</comment>
<comment type="similarity">
    <text evidence="1">Belongs to the imidazoleglycerol-phosphate dehydratase family.</text>
</comment>
<feature type="chain" id="PRO_1000092676" description="Imidazoleglycerol-phosphate dehydratase">
    <location>
        <begin position="1"/>
        <end position="195"/>
    </location>
</feature>
<protein>
    <recommendedName>
        <fullName evidence="1">Imidazoleglycerol-phosphate dehydratase</fullName>
        <shortName evidence="1">IGPD</shortName>
        <ecNumber evidence="1">4.2.1.19</ecNumber>
    </recommendedName>
</protein>
<keyword id="KW-0028">Amino-acid biosynthesis</keyword>
<keyword id="KW-0963">Cytoplasm</keyword>
<keyword id="KW-0368">Histidine biosynthesis</keyword>
<keyword id="KW-0456">Lyase</keyword>
<sequence length="195" mass="21486">MRVAEVVRNTSETQIRVKLDLDGTGQQKLATGVPFLDHMLDQIARHGLVDLEVEAHGDTHIDDHHTVEDVGITLGQAVAKAIGDRKGIRRYGHSYVPLDEALSRVVIDFSGRPGLEFHVPFTRARIGTFDVDLSIEFFRGFVNHAGVTLHIDNLRGINAHHQLETVFKAFGRALRAAVELDERAAGQIPSTKGSL</sequence>